<evidence type="ECO:0000255" key="1">
    <source>
        <dbReference type="HAMAP-Rule" id="MF_00274"/>
    </source>
</evidence>
<proteinExistence type="inferred from homology"/>
<sequence>MRDMMGMMKQAKELQAKMKAMQDEIATMEASASSGGGLVTVTLSGKGTLSALKIDPSLMKEDEVEILEDLIIAAHNDAKAKLEAAMAEKTQSLTAGLPIPPGFKLPF</sequence>
<protein>
    <recommendedName>
        <fullName evidence="1">Nucleoid-associated protein BAB1_0030</fullName>
    </recommendedName>
</protein>
<reference key="1">
    <citation type="journal article" date="2005" name="Infect. Immun.">
        <title>Whole-genome analyses of speciation events in pathogenic Brucellae.</title>
        <authorList>
            <person name="Chain P.S."/>
            <person name="Comerci D.J."/>
            <person name="Tolmasky M.E."/>
            <person name="Larimer F.W."/>
            <person name="Malfatti S.A."/>
            <person name="Vergez L.M."/>
            <person name="Aguero F."/>
            <person name="Land M.L."/>
            <person name="Ugalde R.A."/>
            <person name="Garcia E."/>
        </authorList>
    </citation>
    <scope>NUCLEOTIDE SEQUENCE [LARGE SCALE GENOMIC DNA]</scope>
    <source>
        <strain>2308</strain>
    </source>
</reference>
<feature type="chain" id="PRO_1000003695" description="Nucleoid-associated protein BAB1_0030">
    <location>
        <begin position="1"/>
        <end position="107"/>
    </location>
</feature>
<gene>
    <name type="ordered locus">BAB1_0030</name>
</gene>
<dbReference type="EMBL" id="AM040264">
    <property type="protein sequence ID" value="CAJ09986.1"/>
    <property type="molecule type" value="Genomic_DNA"/>
</dbReference>
<dbReference type="RefSeq" id="WP_002965280.1">
    <property type="nucleotide sequence ID" value="NZ_KN046823.1"/>
</dbReference>
<dbReference type="SMR" id="Q2YPM9"/>
<dbReference type="STRING" id="359391.BAB1_0030"/>
<dbReference type="KEGG" id="bmf:BAB1_0030"/>
<dbReference type="PATRIC" id="fig|359391.11.peg.1454"/>
<dbReference type="HOGENOM" id="CLU_140930_0_1_5"/>
<dbReference type="PhylomeDB" id="Q2YPM9"/>
<dbReference type="Proteomes" id="UP000002719">
    <property type="component" value="Chromosome I"/>
</dbReference>
<dbReference type="GO" id="GO:0043590">
    <property type="term" value="C:bacterial nucleoid"/>
    <property type="evidence" value="ECO:0007669"/>
    <property type="project" value="UniProtKB-UniRule"/>
</dbReference>
<dbReference type="GO" id="GO:0005829">
    <property type="term" value="C:cytosol"/>
    <property type="evidence" value="ECO:0007669"/>
    <property type="project" value="TreeGrafter"/>
</dbReference>
<dbReference type="GO" id="GO:0003677">
    <property type="term" value="F:DNA binding"/>
    <property type="evidence" value="ECO:0007669"/>
    <property type="project" value="UniProtKB-UniRule"/>
</dbReference>
<dbReference type="Gene3D" id="3.30.1310.10">
    <property type="entry name" value="Nucleoid-associated protein YbaB-like domain"/>
    <property type="match status" value="1"/>
</dbReference>
<dbReference type="HAMAP" id="MF_00274">
    <property type="entry name" value="DNA_YbaB_EbfC"/>
    <property type="match status" value="1"/>
</dbReference>
<dbReference type="InterPro" id="IPR036894">
    <property type="entry name" value="YbaB-like_sf"/>
</dbReference>
<dbReference type="InterPro" id="IPR004401">
    <property type="entry name" value="YbaB/EbfC"/>
</dbReference>
<dbReference type="NCBIfam" id="TIGR00103">
    <property type="entry name" value="DNA_YbaB_EbfC"/>
    <property type="match status" value="1"/>
</dbReference>
<dbReference type="PANTHER" id="PTHR33449">
    <property type="entry name" value="NUCLEOID-ASSOCIATED PROTEIN YBAB"/>
    <property type="match status" value="1"/>
</dbReference>
<dbReference type="PANTHER" id="PTHR33449:SF1">
    <property type="entry name" value="NUCLEOID-ASSOCIATED PROTEIN YBAB"/>
    <property type="match status" value="1"/>
</dbReference>
<dbReference type="Pfam" id="PF02575">
    <property type="entry name" value="YbaB_DNA_bd"/>
    <property type="match status" value="1"/>
</dbReference>
<dbReference type="PIRSF" id="PIRSF004555">
    <property type="entry name" value="UCP004555"/>
    <property type="match status" value="1"/>
</dbReference>
<dbReference type="SUPFAM" id="SSF82607">
    <property type="entry name" value="YbaB-like"/>
    <property type="match status" value="1"/>
</dbReference>
<name>Y030_BRUA2</name>
<accession>Q2YPM9</accession>
<keyword id="KW-0963">Cytoplasm</keyword>
<keyword id="KW-0238">DNA-binding</keyword>
<keyword id="KW-1185">Reference proteome</keyword>
<comment type="function">
    <text evidence="1">Binds to DNA and alters its conformation. May be involved in regulation of gene expression, nucleoid organization and DNA protection.</text>
</comment>
<comment type="subunit">
    <text evidence="1">Homodimer.</text>
</comment>
<comment type="subcellular location">
    <subcellularLocation>
        <location evidence="1">Cytoplasm</location>
        <location evidence="1">Nucleoid</location>
    </subcellularLocation>
</comment>
<comment type="similarity">
    <text evidence="1">Belongs to the YbaB/EbfC family.</text>
</comment>
<organism>
    <name type="scientific">Brucella abortus (strain 2308)</name>
    <dbReference type="NCBI Taxonomy" id="359391"/>
    <lineage>
        <taxon>Bacteria</taxon>
        <taxon>Pseudomonadati</taxon>
        <taxon>Pseudomonadota</taxon>
        <taxon>Alphaproteobacteria</taxon>
        <taxon>Hyphomicrobiales</taxon>
        <taxon>Brucellaceae</taxon>
        <taxon>Brucella/Ochrobactrum group</taxon>
        <taxon>Brucella</taxon>
    </lineage>
</organism>